<organism>
    <name type="scientific">Shigella dysenteriae serotype 1 (strain Sd197)</name>
    <dbReference type="NCBI Taxonomy" id="300267"/>
    <lineage>
        <taxon>Bacteria</taxon>
        <taxon>Pseudomonadati</taxon>
        <taxon>Pseudomonadota</taxon>
        <taxon>Gammaproteobacteria</taxon>
        <taxon>Enterobacterales</taxon>
        <taxon>Enterobacteriaceae</taxon>
        <taxon>Shigella</taxon>
    </lineage>
</organism>
<evidence type="ECO:0000255" key="1">
    <source>
        <dbReference type="HAMAP-Rule" id="MF_01217"/>
    </source>
</evidence>
<evidence type="ECO:0000255" key="2">
    <source>
        <dbReference type="PROSITE-ProRule" id="PRU00258"/>
    </source>
</evidence>
<proteinExistence type="inferred from homology"/>
<accession>Q32EV4</accession>
<reference key="1">
    <citation type="journal article" date="2005" name="Nucleic Acids Res.">
        <title>Genome dynamics and diversity of Shigella species, the etiologic agents of bacillary dysentery.</title>
        <authorList>
            <person name="Yang F."/>
            <person name="Yang J."/>
            <person name="Zhang X."/>
            <person name="Chen L."/>
            <person name="Jiang Y."/>
            <person name="Yan Y."/>
            <person name="Tang X."/>
            <person name="Wang J."/>
            <person name="Xiong Z."/>
            <person name="Dong J."/>
            <person name="Xue Y."/>
            <person name="Zhu Y."/>
            <person name="Xu X."/>
            <person name="Sun L."/>
            <person name="Chen S."/>
            <person name="Nie H."/>
            <person name="Peng J."/>
            <person name="Xu J."/>
            <person name="Wang Y."/>
            <person name="Yuan Z."/>
            <person name="Wen Y."/>
            <person name="Yao Z."/>
            <person name="Shen Y."/>
            <person name="Qiang B."/>
            <person name="Hou Y."/>
            <person name="Yu J."/>
            <person name="Jin Q."/>
        </authorList>
    </citation>
    <scope>NUCLEOTIDE SEQUENCE [LARGE SCALE GENOMIC DNA]</scope>
    <source>
        <strain>Sd197</strain>
    </source>
</reference>
<gene>
    <name evidence="1" type="primary">acpP</name>
    <name type="ordered locus">SDY_2056</name>
</gene>
<sequence length="78" mass="8640">MSTIEERVKKIIGEQLGVKQEEVTNNASFVEDLGADSLDTVELVMALEEEFDTEIPDEEAEKITTVQAAIDYINGHQA</sequence>
<keyword id="KW-0963">Cytoplasm</keyword>
<keyword id="KW-0275">Fatty acid biosynthesis</keyword>
<keyword id="KW-0276">Fatty acid metabolism</keyword>
<keyword id="KW-0444">Lipid biosynthesis</keyword>
<keyword id="KW-0443">Lipid metabolism</keyword>
<keyword id="KW-0596">Phosphopantetheine</keyword>
<keyword id="KW-0597">Phosphoprotein</keyword>
<keyword id="KW-1185">Reference proteome</keyword>
<feature type="chain" id="PRO_1000066690" description="Acyl carrier protein">
    <location>
        <begin position="1"/>
        <end position="78"/>
    </location>
</feature>
<feature type="domain" description="Carrier" evidence="2">
    <location>
        <begin position="2"/>
        <end position="77"/>
    </location>
</feature>
<feature type="modified residue" description="O-(pantetheine 4'-phosphoryl)serine" evidence="2">
    <location>
        <position position="37"/>
    </location>
</feature>
<protein>
    <recommendedName>
        <fullName evidence="1">Acyl carrier protein</fullName>
        <shortName evidence="1">ACP</shortName>
    </recommendedName>
</protein>
<name>ACP_SHIDS</name>
<dbReference type="EMBL" id="CP000034">
    <property type="protein sequence ID" value="ABB62151.1"/>
    <property type="molecule type" value="Genomic_DNA"/>
</dbReference>
<dbReference type="RefSeq" id="WP_000103754.1">
    <property type="nucleotide sequence ID" value="NC_007606.1"/>
</dbReference>
<dbReference type="RefSeq" id="YP_403642.1">
    <property type="nucleotide sequence ID" value="NC_007606.1"/>
</dbReference>
<dbReference type="SMR" id="Q32EV4"/>
<dbReference type="STRING" id="300267.SDY_2056"/>
<dbReference type="EnsemblBacteria" id="ABB62151">
    <property type="protein sequence ID" value="ABB62151"/>
    <property type="gene ID" value="SDY_2056"/>
</dbReference>
<dbReference type="GeneID" id="98387866"/>
<dbReference type="KEGG" id="sdy:SDY_2056"/>
<dbReference type="PATRIC" id="fig|300267.13.peg.2471"/>
<dbReference type="HOGENOM" id="CLU_108696_5_1_6"/>
<dbReference type="UniPathway" id="UPA00094"/>
<dbReference type="PRO" id="PR:Q32EV4"/>
<dbReference type="Proteomes" id="UP000002716">
    <property type="component" value="Chromosome"/>
</dbReference>
<dbReference type="GO" id="GO:0005829">
    <property type="term" value="C:cytosol"/>
    <property type="evidence" value="ECO:0007669"/>
    <property type="project" value="TreeGrafter"/>
</dbReference>
<dbReference type="GO" id="GO:0016020">
    <property type="term" value="C:membrane"/>
    <property type="evidence" value="ECO:0007669"/>
    <property type="project" value="GOC"/>
</dbReference>
<dbReference type="GO" id="GO:0000035">
    <property type="term" value="F:acyl binding"/>
    <property type="evidence" value="ECO:0007669"/>
    <property type="project" value="TreeGrafter"/>
</dbReference>
<dbReference type="GO" id="GO:0000036">
    <property type="term" value="F:acyl carrier activity"/>
    <property type="evidence" value="ECO:0007669"/>
    <property type="project" value="UniProtKB-UniRule"/>
</dbReference>
<dbReference type="GO" id="GO:0009245">
    <property type="term" value="P:lipid A biosynthetic process"/>
    <property type="evidence" value="ECO:0007669"/>
    <property type="project" value="TreeGrafter"/>
</dbReference>
<dbReference type="FunFam" id="1.10.1200.10:FF:000001">
    <property type="entry name" value="Acyl carrier protein"/>
    <property type="match status" value="1"/>
</dbReference>
<dbReference type="Gene3D" id="1.10.1200.10">
    <property type="entry name" value="ACP-like"/>
    <property type="match status" value="1"/>
</dbReference>
<dbReference type="HAMAP" id="MF_01217">
    <property type="entry name" value="Acyl_carrier"/>
    <property type="match status" value="1"/>
</dbReference>
<dbReference type="InterPro" id="IPR003231">
    <property type="entry name" value="ACP"/>
</dbReference>
<dbReference type="InterPro" id="IPR036736">
    <property type="entry name" value="ACP-like_sf"/>
</dbReference>
<dbReference type="InterPro" id="IPR009081">
    <property type="entry name" value="PP-bd_ACP"/>
</dbReference>
<dbReference type="InterPro" id="IPR006162">
    <property type="entry name" value="Ppantetheine_attach_site"/>
</dbReference>
<dbReference type="NCBIfam" id="TIGR00517">
    <property type="entry name" value="acyl_carrier"/>
    <property type="match status" value="1"/>
</dbReference>
<dbReference type="NCBIfam" id="NF002148">
    <property type="entry name" value="PRK00982.1-2"/>
    <property type="match status" value="1"/>
</dbReference>
<dbReference type="NCBIfam" id="NF002149">
    <property type="entry name" value="PRK00982.1-3"/>
    <property type="match status" value="1"/>
</dbReference>
<dbReference type="NCBIfam" id="NF002150">
    <property type="entry name" value="PRK00982.1-4"/>
    <property type="match status" value="1"/>
</dbReference>
<dbReference type="NCBIfam" id="NF002151">
    <property type="entry name" value="PRK00982.1-5"/>
    <property type="match status" value="1"/>
</dbReference>
<dbReference type="PANTHER" id="PTHR20863">
    <property type="entry name" value="ACYL CARRIER PROTEIN"/>
    <property type="match status" value="1"/>
</dbReference>
<dbReference type="PANTHER" id="PTHR20863:SF76">
    <property type="entry name" value="CARRIER DOMAIN-CONTAINING PROTEIN"/>
    <property type="match status" value="1"/>
</dbReference>
<dbReference type="Pfam" id="PF00550">
    <property type="entry name" value="PP-binding"/>
    <property type="match status" value="1"/>
</dbReference>
<dbReference type="SUPFAM" id="SSF47336">
    <property type="entry name" value="ACP-like"/>
    <property type="match status" value="1"/>
</dbReference>
<dbReference type="PROSITE" id="PS50075">
    <property type="entry name" value="CARRIER"/>
    <property type="match status" value="1"/>
</dbReference>
<dbReference type="PROSITE" id="PS00012">
    <property type="entry name" value="PHOSPHOPANTETHEINE"/>
    <property type="match status" value="1"/>
</dbReference>
<comment type="function">
    <text evidence="1">Carrier of the growing fatty acid chain in fatty acid biosynthesis.</text>
</comment>
<comment type="pathway">
    <text evidence="1">Lipid metabolism; fatty acid biosynthesis.</text>
</comment>
<comment type="subcellular location">
    <subcellularLocation>
        <location evidence="1">Cytoplasm</location>
    </subcellularLocation>
</comment>
<comment type="PTM">
    <text evidence="1">4'-phosphopantetheine is transferred from CoA to a specific serine of apo-ACP by AcpS. This modification is essential for activity because fatty acids are bound in thioester linkage to the sulfhydryl of the prosthetic group.</text>
</comment>
<comment type="similarity">
    <text evidence="1">Belongs to the acyl carrier protein (ACP) family.</text>
</comment>